<feature type="chain" id="PRO_0000459776" description="Maintenance of carboxysome distribution protein A">
    <location>
        <begin position="1"/>
        <end position="216"/>
    </location>
</feature>
<feature type="binding site" evidence="1">
    <location>
        <position position="16"/>
    </location>
    <ligand>
        <name>ATP</name>
        <dbReference type="ChEBI" id="CHEBI:30616"/>
    </ligand>
</feature>
<feature type="binding site" evidence="1">
    <location>
        <position position="17"/>
    </location>
    <ligand>
        <name>ATP</name>
        <dbReference type="ChEBI" id="CHEBI:30616"/>
    </ligand>
</feature>
<feature type="binding site" evidence="1">
    <location>
        <position position="19"/>
    </location>
    <ligand>
        <name>ATP</name>
        <dbReference type="ChEBI" id="CHEBI:30616"/>
    </ligand>
</feature>
<feature type="binding site" evidence="1">
    <location>
        <position position="20"/>
    </location>
    <ligand>
        <name>ATP</name>
        <dbReference type="ChEBI" id="CHEBI:30616"/>
    </ligand>
</feature>
<feature type="binding site" evidence="1">
    <location>
        <position position="21"/>
    </location>
    <ligand>
        <name>ATP</name>
        <dbReference type="ChEBI" id="CHEBI:30616"/>
    </ligand>
</feature>
<feature type="binding site" evidence="1">
    <location>
        <position position="21"/>
    </location>
    <ligand>
        <name>Mg(2+)</name>
        <dbReference type="ChEBI" id="CHEBI:18420"/>
    </ligand>
</feature>
<feature type="binding site" evidence="1">
    <location>
        <position position="22"/>
    </location>
    <ligand>
        <name>ATP</name>
        <dbReference type="ChEBI" id="CHEBI:30616"/>
    </ligand>
</feature>
<feature type="binding site" evidence="1">
    <location>
        <position position="45"/>
    </location>
    <ligand>
        <name>ATP</name>
        <dbReference type="ChEBI" id="CHEBI:30616"/>
    </ligand>
</feature>
<comment type="function">
    <text evidence="2 3">McdA and McdB together mediate carboxysome positioning on the nucleoid and prevent their aggregation in the cell (PubMed:33638215). McdA is an ATPase that forms dynamic gradients on the nucleoid in response to adapter protein McdB, which associates with carboxysomes. The interplay between McdA gradients on the nucleoid and McdB-bound carboxysomes result in the equal spacing of Cbs along the cell length (By similarity).</text>
</comment>
<comment type="function">
    <text evidence="2">Incorrect positioning (aggregation) of carboxysomes results in reduced CO(2) fixation by encapsulated form 1 ribulose-1,5-bisphosphate carboxylase (RuBisCO, cbbL/cbbS), which leads to slower growth.</text>
</comment>
<comment type="catalytic activity">
    <reaction evidence="2">
        <text>ATP + H2O = ADP + phosphate + H(+)</text>
        <dbReference type="Rhea" id="RHEA:13065"/>
        <dbReference type="ChEBI" id="CHEBI:15377"/>
        <dbReference type="ChEBI" id="CHEBI:15378"/>
        <dbReference type="ChEBI" id="CHEBI:30616"/>
        <dbReference type="ChEBI" id="CHEBI:43474"/>
        <dbReference type="ChEBI" id="CHEBI:456216"/>
    </reaction>
</comment>
<comment type="subunit">
    <text evidence="3">Self-associates, associates with McdB (PubMed:33638215).</text>
</comment>
<comment type="subcellular location">
    <subcellularLocation>
        <location evidence="6">Cytoplasm</location>
        <location evidence="6">Nucleoid</location>
    </subcellularLocation>
</comment>
<comment type="domain">
    <text evidence="1">Has an adenine-nucleotide sandwich dimer structure in common with ParA ATPases. Nucleotide-binding forces changes that create an ATP-binding pocket.</text>
</comment>
<comment type="disruption phenotype">
    <text evidence="3">Carboxysomes (Cb) are no longer evenly distributed over the nucleoid region on the whole cell length; 76% localize to one cell pole, 7% have Cb at both poles while 17% lack Cbs (PubMed:33638215). Cbs are nucleoid excluded.</text>
</comment>
<comment type="similarity">
    <text evidence="5">Belongs to the ParA family. McdA subfamily.</text>
</comment>
<organism>
    <name type="scientific">Halothiobacillus neapolitanus (strain ATCC 23641 / c2)</name>
    <name type="common">Thiobacillus neapolitanus</name>
    <dbReference type="NCBI Taxonomy" id="555778"/>
    <lineage>
        <taxon>Bacteria</taxon>
        <taxon>Pseudomonadati</taxon>
        <taxon>Pseudomonadota</taxon>
        <taxon>Gammaproteobacteria</taxon>
        <taxon>Chromatiales</taxon>
        <taxon>Halothiobacillaceae</taxon>
        <taxon>Halothiobacillus</taxon>
    </lineage>
</organism>
<reference evidence="7" key="1">
    <citation type="submission" date="2009-10" db="EMBL/GenBank/DDBJ databases">
        <title>Complete sequence of Halothiobacillus neapolitanus c2.</title>
        <authorList>
            <consortium name="US DOE Joint Genome Institute"/>
            <person name="Lucas S."/>
            <person name="Copeland A."/>
            <person name="Lapidus A."/>
            <person name="Glavina del Rio T."/>
            <person name="Tice H."/>
            <person name="Bruce D."/>
            <person name="Goodwin L."/>
            <person name="Pitluck S."/>
            <person name="Davenport K."/>
            <person name="Brettin T."/>
            <person name="Detter J.C."/>
            <person name="Han C."/>
            <person name="Tapia R."/>
            <person name="Larimer F."/>
            <person name="Land M."/>
            <person name="Hauser L."/>
            <person name="Kyrpides N."/>
            <person name="Mikhailova N."/>
            <person name="Kerfeld C."/>
            <person name="Cannon G."/>
            <person name="Heinhort S."/>
        </authorList>
    </citation>
    <scope>NUCLEOTIDE SEQUENCE [LARGE SCALE GENOMIC DNA]</scope>
    <source>
        <strain>ATCC 23641 / c2</strain>
    </source>
</reference>
<reference key="2">
    <citation type="journal article" date="2021" name="Mol. Microbiol.">
        <title>The McdAB system positions alpha-carboxysomes in proteobacteria.</title>
        <authorList>
            <person name="MacCready J.S."/>
            <person name="Tran L."/>
            <person name="Basalla J.L."/>
            <person name="Hakim P."/>
            <person name="Vecchiarelli A.G."/>
        </authorList>
    </citation>
    <scope>FUNCTION</scope>
    <scope>SUBUNIT</scope>
    <scope>SUBCELLULAR LOCATION</scope>
    <scope>INTERACTION WITH MCDB</scope>
    <scope>DISRUPTION PHENOTYPE</scope>
    <source>
        <strain>ATCC 23641 / c2</strain>
    </source>
</reference>
<accession>D0KZ82</accession>
<protein>
    <recommendedName>
        <fullName evidence="4">Maintenance of carboxysome distribution protein A</fullName>
        <shortName evidence="4">alpha-McdA</shortName>
        <ecNumber evidence="2">3.6.4.-</ecNumber>
    </recommendedName>
</protein>
<proteinExistence type="evidence at protein level"/>
<sequence length="216" mass="23388">MASNKAFTLAVANLKGGCGKTTISTNISAGLTQRGRVGLVDADPQGALKHWVDWGSKEADAQVPVLYSDHTDPVQNLKLAQPNHDFVVVDCPPSLDMAITCQLMIECDFILIPVLPSPLDLWASTQTIEMIESARKTNPKLKAALVLNQTEPRSAMTRAMQTTIERLGVPVLTTSVRRRAVYRNAVVEGVSVFQLGARGRSAADEINQILNEVIPS</sequence>
<dbReference type="EC" id="3.6.4.-" evidence="2"/>
<dbReference type="EMBL" id="CP001801">
    <property type="protein sequence ID" value="ACX95755.1"/>
    <property type="molecule type" value="Genomic_DNA"/>
</dbReference>
<dbReference type="SMR" id="D0KZ82"/>
<dbReference type="STRING" id="555778.Hneap_0912"/>
<dbReference type="KEGG" id="hna:Hneap_0912"/>
<dbReference type="eggNOG" id="COG1192">
    <property type="taxonomic scope" value="Bacteria"/>
</dbReference>
<dbReference type="HOGENOM" id="CLU_037612_5_3_6"/>
<dbReference type="Proteomes" id="UP000009102">
    <property type="component" value="Chromosome"/>
</dbReference>
<dbReference type="GO" id="GO:0005737">
    <property type="term" value="C:cytoplasm"/>
    <property type="evidence" value="ECO:0007669"/>
    <property type="project" value="UniProtKB-KW"/>
</dbReference>
<dbReference type="GO" id="GO:0009295">
    <property type="term" value="C:nucleoid"/>
    <property type="evidence" value="ECO:0007669"/>
    <property type="project" value="UniProtKB-SubCell"/>
</dbReference>
<dbReference type="GO" id="GO:0005524">
    <property type="term" value="F:ATP binding"/>
    <property type="evidence" value="ECO:0007669"/>
    <property type="project" value="UniProtKB-KW"/>
</dbReference>
<dbReference type="GO" id="GO:0016787">
    <property type="term" value="F:hydrolase activity"/>
    <property type="evidence" value="ECO:0007669"/>
    <property type="project" value="UniProtKB-KW"/>
</dbReference>
<dbReference type="GO" id="GO:0046872">
    <property type="term" value="F:metal ion binding"/>
    <property type="evidence" value="ECO:0007669"/>
    <property type="project" value="UniProtKB-KW"/>
</dbReference>
<dbReference type="GO" id="GO:0015977">
    <property type="term" value="P:carbon fixation"/>
    <property type="evidence" value="ECO:0007669"/>
    <property type="project" value="UniProtKB-KW"/>
</dbReference>
<dbReference type="CDD" id="cd02042">
    <property type="entry name" value="ParAB_family"/>
    <property type="match status" value="1"/>
</dbReference>
<dbReference type="Gene3D" id="3.40.50.300">
    <property type="entry name" value="P-loop containing nucleotide triphosphate hydrolases"/>
    <property type="match status" value="1"/>
</dbReference>
<dbReference type="InterPro" id="IPR002586">
    <property type="entry name" value="CobQ/CobB/MinD/ParA_Nub-bd_dom"/>
</dbReference>
<dbReference type="InterPro" id="IPR050678">
    <property type="entry name" value="DNA_Partitioning_ATPase"/>
</dbReference>
<dbReference type="InterPro" id="IPR048089">
    <property type="entry name" value="McdA"/>
</dbReference>
<dbReference type="InterPro" id="IPR027417">
    <property type="entry name" value="P-loop_NTPase"/>
</dbReference>
<dbReference type="NCBIfam" id="NF041546">
    <property type="entry name" value="ParA_partition"/>
    <property type="match status" value="1"/>
</dbReference>
<dbReference type="PANTHER" id="PTHR13696:SF96">
    <property type="entry name" value="COBQ_COBB_MIND_PARA NUCLEOTIDE BINDING DOMAIN-CONTAINING PROTEIN"/>
    <property type="match status" value="1"/>
</dbReference>
<dbReference type="PANTHER" id="PTHR13696">
    <property type="entry name" value="P-LOOP CONTAINING NUCLEOSIDE TRIPHOSPHATE HYDROLASE"/>
    <property type="match status" value="1"/>
</dbReference>
<dbReference type="Pfam" id="PF01656">
    <property type="entry name" value="CbiA"/>
    <property type="match status" value="1"/>
</dbReference>
<dbReference type="PIRSF" id="PIRSF009320">
    <property type="entry name" value="Nuc_binding_HP_1000"/>
    <property type="match status" value="1"/>
</dbReference>
<dbReference type="SUPFAM" id="SSF52540">
    <property type="entry name" value="P-loop containing nucleoside triphosphate hydrolases"/>
    <property type="match status" value="1"/>
</dbReference>
<evidence type="ECO:0000250" key="1">
    <source>
        <dbReference type="UniProtKB" id="B7KMS4"/>
    </source>
</evidence>
<evidence type="ECO:0000250" key="2">
    <source>
        <dbReference type="UniProtKB" id="Q8GJM5"/>
    </source>
</evidence>
<evidence type="ECO:0000269" key="3">
    <source>
    </source>
</evidence>
<evidence type="ECO:0000303" key="4">
    <source>
    </source>
</evidence>
<evidence type="ECO:0000305" key="5"/>
<evidence type="ECO:0000305" key="6">
    <source>
    </source>
</evidence>
<evidence type="ECO:0000312" key="7">
    <source>
        <dbReference type="EMBL" id="ACX95755.1"/>
    </source>
</evidence>
<name>MCDA_HALNC</name>
<gene>
    <name evidence="4" type="primary">mcdA</name>
    <name evidence="7" type="ordered locus">Hneap_0912</name>
</gene>
<keyword id="KW-0067">ATP-binding</keyword>
<keyword id="KW-0120">Carbon dioxide fixation</keyword>
<keyword id="KW-0963">Cytoplasm</keyword>
<keyword id="KW-0378">Hydrolase</keyword>
<keyword id="KW-0460">Magnesium</keyword>
<keyword id="KW-0479">Metal-binding</keyword>
<keyword id="KW-0547">Nucleotide-binding</keyword>
<keyword id="KW-1185">Reference proteome</keyword>